<organism>
    <name type="scientific">Mus musculus</name>
    <name type="common">Mouse</name>
    <dbReference type="NCBI Taxonomy" id="10090"/>
    <lineage>
        <taxon>Eukaryota</taxon>
        <taxon>Metazoa</taxon>
        <taxon>Chordata</taxon>
        <taxon>Craniata</taxon>
        <taxon>Vertebrata</taxon>
        <taxon>Euteleostomi</taxon>
        <taxon>Mammalia</taxon>
        <taxon>Eutheria</taxon>
        <taxon>Euarchontoglires</taxon>
        <taxon>Glires</taxon>
        <taxon>Rodentia</taxon>
        <taxon>Myomorpha</taxon>
        <taxon>Muroidea</taxon>
        <taxon>Muridae</taxon>
        <taxon>Murinae</taxon>
        <taxon>Mus</taxon>
        <taxon>Mus</taxon>
    </lineage>
</organism>
<proteinExistence type="evidence at protein level"/>
<dbReference type="EC" id="2.7.11.1"/>
<dbReference type="EMBL" id="Y17138">
    <property type="protein sequence ID" value="CAA76647.1"/>
    <property type="molecule type" value="mRNA"/>
</dbReference>
<dbReference type="EMBL" id="Y17137">
    <property type="protein sequence ID" value="CAA76646.1"/>
    <property type="molecule type" value="mRNA"/>
</dbReference>
<dbReference type="EMBL" id="AL671117">
    <property type="status" value="NOT_ANNOTATED_CDS"/>
    <property type="molecule type" value="Genomic_DNA"/>
</dbReference>
<dbReference type="EMBL" id="AL672204">
    <property type="status" value="NOT_ANNOTATED_CDS"/>
    <property type="molecule type" value="Genomic_DNA"/>
</dbReference>
<dbReference type="EMBL" id="BX005215">
    <property type="status" value="NOT_ANNOTATED_CDS"/>
    <property type="molecule type" value="Genomic_DNA"/>
</dbReference>
<dbReference type="EMBL" id="AK136523">
    <property type="protein sequence ID" value="BAE23024.1"/>
    <property type="molecule type" value="mRNA"/>
</dbReference>
<dbReference type="CCDS" id="CCDS40878.1">
    <molecule id="O70589-3"/>
</dbReference>
<dbReference type="CCDS" id="CCDS72343.1">
    <molecule id="O70589-5"/>
</dbReference>
<dbReference type="RefSeq" id="NP_001271432.1">
    <molecule id="O70589-1"/>
    <property type="nucleotide sequence ID" value="NM_001284503.1"/>
</dbReference>
<dbReference type="RefSeq" id="NP_001271433.1">
    <property type="nucleotide sequence ID" value="NM_001284504.1"/>
</dbReference>
<dbReference type="RefSeq" id="NP_001271434.1">
    <molecule id="O70589-5"/>
    <property type="nucleotide sequence ID" value="NM_001284505.1"/>
</dbReference>
<dbReference type="RefSeq" id="NP_033936.2">
    <molecule id="O70589-3"/>
    <property type="nucleotide sequence ID" value="NM_009806.3"/>
</dbReference>
<dbReference type="PDB" id="1Y74">
    <property type="method" value="NMR"/>
    <property type="chains" value="B/D=405-454"/>
</dbReference>
<dbReference type="PDB" id="6Y9O">
    <property type="method" value="X-ray"/>
    <property type="resolution" value="1.63 A"/>
    <property type="chains" value="C=915-926"/>
</dbReference>
<dbReference type="PDBsum" id="1Y74"/>
<dbReference type="PDBsum" id="6Y9O"/>
<dbReference type="SMR" id="O70589"/>
<dbReference type="BioGRID" id="198491">
    <property type="interactions" value="35"/>
</dbReference>
<dbReference type="ComplexPortal" id="CPX-7741">
    <property type="entry name" value="LIN-10-LIN-2-LIN-7 complex, LIN7A variant"/>
</dbReference>
<dbReference type="ComplexPortal" id="CPX-7742">
    <property type="entry name" value="LIN-10-LIN-2-LIN-7 complex, LIN7C variant"/>
</dbReference>
<dbReference type="ComplexPortal" id="CPX-884">
    <property type="entry name" value="LIN-10-LIN-2-LIN-7 complex, LIN7B variant"/>
</dbReference>
<dbReference type="CORUM" id="O70589"/>
<dbReference type="ELM" id="O70589"/>
<dbReference type="FunCoup" id="O70589">
    <property type="interactions" value="1835"/>
</dbReference>
<dbReference type="IntAct" id="O70589">
    <property type="interactions" value="20"/>
</dbReference>
<dbReference type="MINT" id="O70589"/>
<dbReference type="STRING" id="10090.ENSMUSP00000111098"/>
<dbReference type="GlyGen" id="O70589">
    <property type="glycosylation" value="1 site"/>
</dbReference>
<dbReference type="iPTMnet" id="O70589"/>
<dbReference type="PhosphoSitePlus" id="O70589"/>
<dbReference type="SwissPalm" id="O70589"/>
<dbReference type="jPOST" id="O70589"/>
<dbReference type="PaxDb" id="10090-ENSMUSP00000033321"/>
<dbReference type="PeptideAtlas" id="O70589"/>
<dbReference type="ProteomicsDB" id="284181">
    <molecule id="O70589-1"/>
</dbReference>
<dbReference type="ProteomicsDB" id="284182">
    <molecule id="O70589-2"/>
</dbReference>
<dbReference type="ProteomicsDB" id="284183">
    <molecule id="O70589-3"/>
</dbReference>
<dbReference type="ProteomicsDB" id="285208">
    <molecule id="O70589-4"/>
</dbReference>
<dbReference type="ProteomicsDB" id="285209">
    <molecule id="O70589-5"/>
</dbReference>
<dbReference type="Pumba" id="O70589"/>
<dbReference type="ABCD" id="O70589">
    <property type="antibodies" value="1 sequenced antibody"/>
</dbReference>
<dbReference type="Antibodypedia" id="4529">
    <property type="antibodies" value="301 antibodies from 39 providers"/>
</dbReference>
<dbReference type="DNASU" id="12361"/>
<dbReference type="Ensembl" id="ENSMUST00000033321.11">
    <molecule id="O70589-4"/>
    <property type="protein sequence ID" value="ENSMUSP00000033321.5"/>
    <property type="gene ID" value="ENSMUSG00000031012.18"/>
</dbReference>
<dbReference type="Ensembl" id="ENSMUST00000115436.9">
    <molecule id="O70589-3"/>
    <property type="protein sequence ID" value="ENSMUSP00000111096.3"/>
    <property type="gene ID" value="ENSMUSG00000031012.18"/>
</dbReference>
<dbReference type="Ensembl" id="ENSMUST00000115438.10">
    <molecule id="O70589-5"/>
    <property type="protein sequence ID" value="ENSMUSP00000111098.4"/>
    <property type="gene ID" value="ENSMUSG00000031012.18"/>
</dbReference>
<dbReference type="GeneID" id="12361"/>
<dbReference type="KEGG" id="mmu:12361"/>
<dbReference type="UCSC" id="uc009srp.2">
    <molecule id="O70589-3"/>
    <property type="organism name" value="mouse"/>
</dbReference>
<dbReference type="UCSC" id="uc009srq.2">
    <molecule id="O70589-1"/>
    <property type="organism name" value="mouse"/>
</dbReference>
<dbReference type="UCSC" id="uc012hez.2">
    <molecule id="O70589-5"/>
    <property type="organism name" value="mouse"/>
</dbReference>
<dbReference type="AGR" id="MGI:1309489"/>
<dbReference type="CTD" id="8573"/>
<dbReference type="MGI" id="MGI:1309489">
    <property type="gene designation" value="Cask"/>
</dbReference>
<dbReference type="VEuPathDB" id="HostDB:ENSMUSG00000031012"/>
<dbReference type="eggNOG" id="KOG0033">
    <property type="taxonomic scope" value="Eukaryota"/>
</dbReference>
<dbReference type="eggNOG" id="KOG0609">
    <property type="taxonomic scope" value="Eukaryota"/>
</dbReference>
<dbReference type="GeneTree" id="ENSGT00940000155600"/>
<dbReference type="InParanoid" id="O70589"/>
<dbReference type="OMA" id="STKWASF"/>
<dbReference type="PhylomeDB" id="O70589"/>
<dbReference type="TreeFam" id="TF314263"/>
<dbReference type="BRENDA" id="2.7.11.1">
    <property type="organism ID" value="3474"/>
</dbReference>
<dbReference type="Reactome" id="R-MMU-212676">
    <property type="pathway name" value="Dopamine Neurotransmitter Release Cycle"/>
</dbReference>
<dbReference type="Reactome" id="R-MMU-6794361">
    <property type="pathway name" value="Neurexins and neuroligins"/>
</dbReference>
<dbReference type="BioGRID-ORCS" id="12361">
    <property type="hits" value="2 hits in 82 CRISPR screens"/>
</dbReference>
<dbReference type="CD-CODE" id="CE726F99">
    <property type="entry name" value="Postsynaptic density"/>
</dbReference>
<dbReference type="ChiTaRS" id="Cask">
    <property type="organism name" value="mouse"/>
</dbReference>
<dbReference type="EvolutionaryTrace" id="O70589"/>
<dbReference type="PRO" id="PR:O70589"/>
<dbReference type="Proteomes" id="UP000000589">
    <property type="component" value="Chromosome X"/>
</dbReference>
<dbReference type="RNAct" id="O70589">
    <property type="molecule type" value="protein"/>
</dbReference>
<dbReference type="Bgee" id="ENSMUSG00000031012">
    <property type="expression patterns" value="Expressed in cortical plate and 261 other cell types or tissues"/>
</dbReference>
<dbReference type="ExpressionAtlas" id="O70589">
    <property type="expression patterns" value="baseline and differential"/>
</dbReference>
<dbReference type="GO" id="GO:0005604">
    <property type="term" value="C:basement membrane"/>
    <property type="evidence" value="ECO:0000314"/>
    <property type="project" value="CACAO"/>
</dbReference>
<dbReference type="GO" id="GO:0016323">
    <property type="term" value="C:basolateral plasma membrane"/>
    <property type="evidence" value="ECO:0000314"/>
    <property type="project" value="MGI"/>
</dbReference>
<dbReference type="GO" id="GO:0005911">
    <property type="term" value="C:cell-cell junction"/>
    <property type="evidence" value="ECO:0000314"/>
    <property type="project" value="BHF-UCL"/>
</dbReference>
<dbReference type="GO" id="GO:0005737">
    <property type="term" value="C:cytoplasm"/>
    <property type="evidence" value="ECO:0000314"/>
    <property type="project" value="BHF-UCL"/>
</dbReference>
<dbReference type="GO" id="GO:0005829">
    <property type="term" value="C:cytosol"/>
    <property type="evidence" value="ECO:0000314"/>
    <property type="project" value="MGI"/>
</dbReference>
<dbReference type="GO" id="GO:0016020">
    <property type="term" value="C:membrane"/>
    <property type="evidence" value="ECO:0000314"/>
    <property type="project" value="MGI"/>
</dbReference>
<dbReference type="GO" id="GO:0005652">
    <property type="term" value="C:nuclear lamina"/>
    <property type="evidence" value="ECO:0007669"/>
    <property type="project" value="Ensembl"/>
</dbReference>
<dbReference type="GO" id="GO:0016363">
    <property type="term" value="C:nuclear matrix"/>
    <property type="evidence" value="ECO:0007669"/>
    <property type="project" value="Ensembl"/>
</dbReference>
<dbReference type="GO" id="GO:0005730">
    <property type="term" value="C:nucleolus"/>
    <property type="evidence" value="ECO:0007669"/>
    <property type="project" value="Ensembl"/>
</dbReference>
<dbReference type="GO" id="GO:0005634">
    <property type="term" value="C:nucleus"/>
    <property type="evidence" value="ECO:0000314"/>
    <property type="project" value="BHF-UCL"/>
</dbReference>
<dbReference type="GO" id="GO:0098685">
    <property type="term" value="C:Schaffer collateral - CA1 synapse"/>
    <property type="evidence" value="ECO:0000314"/>
    <property type="project" value="SynGO"/>
</dbReference>
<dbReference type="GO" id="GO:0045202">
    <property type="term" value="C:synapse"/>
    <property type="evidence" value="ECO:0000314"/>
    <property type="project" value="MGI"/>
</dbReference>
<dbReference type="GO" id="GO:0031982">
    <property type="term" value="C:vesicle"/>
    <property type="evidence" value="ECO:0000314"/>
    <property type="project" value="BHF-UCL"/>
</dbReference>
<dbReference type="GO" id="GO:0005524">
    <property type="term" value="F:ATP binding"/>
    <property type="evidence" value="ECO:0007669"/>
    <property type="project" value="UniProtKB-KW"/>
</dbReference>
<dbReference type="GO" id="GO:0005516">
    <property type="term" value="F:calmodulin binding"/>
    <property type="evidence" value="ECO:0007669"/>
    <property type="project" value="UniProtKB-KW"/>
</dbReference>
<dbReference type="GO" id="GO:0042043">
    <property type="term" value="F:neurexin family protein binding"/>
    <property type="evidence" value="ECO:0000314"/>
    <property type="project" value="MGI"/>
</dbReference>
<dbReference type="GO" id="GO:0106310">
    <property type="term" value="F:protein serine kinase activity"/>
    <property type="evidence" value="ECO:0007669"/>
    <property type="project" value="RHEA"/>
</dbReference>
<dbReference type="GO" id="GO:0004674">
    <property type="term" value="F:protein serine/threonine kinase activity"/>
    <property type="evidence" value="ECO:0007669"/>
    <property type="project" value="UniProtKB-KW"/>
</dbReference>
<dbReference type="GO" id="GO:0070509">
    <property type="term" value="P:calcium ion import"/>
    <property type="evidence" value="ECO:0000315"/>
    <property type="project" value="MGI"/>
</dbReference>
<dbReference type="GO" id="GO:0051649">
    <property type="term" value="P:establishment of localization in cell"/>
    <property type="evidence" value="ECO:0000315"/>
    <property type="project" value="MGI"/>
</dbReference>
<dbReference type="GO" id="GO:0001953">
    <property type="term" value="P:negative regulation of cell-matrix adhesion"/>
    <property type="evidence" value="ECO:0007669"/>
    <property type="project" value="Ensembl"/>
</dbReference>
<dbReference type="GO" id="GO:0090288">
    <property type="term" value="P:negative regulation of cellular response to growth factor stimulus"/>
    <property type="evidence" value="ECO:0007669"/>
    <property type="project" value="Ensembl"/>
</dbReference>
<dbReference type="GO" id="GO:0010839">
    <property type="term" value="P:negative regulation of keratinocyte proliferation"/>
    <property type="evidence" value="ECO:0007669"/>
    <property type="project" value="Ensembl"/>
</dbReference>
<dbReference type="GO" id="GO:0061045">
    <property type="term" value="P:negative regulation of wound healing"/>
    <property type="evidence" value="ECO:0007669"/>
    <property type="project" value="Ensembl"/>
</dbReference>
<dbReference type="GO" id="GO:0090280">
    <property type="term" value="P:positive regulation of calcium ion import"/>
    <property type="evidence" value="ECO:0000314"/>
    <property type="project" value="MGI"/>
</dbReference>
<dbReference type="GO" id="GO:0045944">
    <property type="term" value="P:positive regulation of transcription by RNA polymerase II"/>
    <property type="evidence" value="ECO:0000316"/>
    <property type="project" value="MGI"/>
</dbReference>
<dbReference type="GO" id="GO:2000300">
    <property type="term" value="P:regulation of synaptic vesicle exocytosis"/>
    <property type="evidence" value="ECO:0000314"/>
    <property type="project" value="SynGO"/>
</dbReference>
<dbReference type="CDD" id="cd00071">
    <property type="entry name" value="GMPK"/>
    <property type="match status" value="1"/>
</dbReference>
<dbReference type="CDD" id="cd10831">
    <property type="entry name" value="PDZ_CASK-like"/>
    <property type="match status" value="1"/>
</dbReference>
<dbReference type="CDD" id="cd12081">
    <property type="entry name" value="SH3_CASK"/>
    <property type="match status" value="1"/>
</dbReference>
<dbReference type="CDD" id="cd14094">
    <property type="entry name" value="STKc_CASK"/>
    <property type="match status" value="1"/>
</dbReference>
<dbReference type="FunFam" id="3.40.50.300:FF:000146">
    <property type="entry name" value="MAGUK p55 subfamily member 6 isoform X1"/>
    <property type="match status" value="1"/>
</dbReference>
<dbReference type="FunFam" id="3.30.200.20:FF:000051">
    <property type="entry name" value="Peripheral plasma membrane protein CASK isoform B"/>
    <property type="match status" value="1"/>
</dbReference>
<dbReference type="FunFam" id="2.30.30.40:FF:000080">
    <property type="entry name" value="Peripheral plasma membrane protein CASK isoform X2"/>
    <property type="match status" value="1"/>
</dbReference>
<dbReference type="FunFam" id="1.10.510.10:FF:000062">
    <property type="entry name" value="peripheral plasma membrane protein CASK isoform X2"/>
    <property type="match status" value="1"/>
</dbReference>
<dbReference type="FunFam" id="2.30.42.10:FF:000016">
    <property type="entry name" value="peripheral plasma membrane protein CASK isoform X2"/>
    <property type="match status" value="1"/>
</dbReference>
<dbReference type="FunFam" id="3.30.63.10:FF:000004">
    <property type="entry name" value="peripheral plasma membrane protein CASK isoform X2"/>
    <property type="match status" value="1"/>
</dbReference>
<dbReference type="Gene3D" id="2.30.42.10">
    <property type="match status" value="1"/>
</dbReference>
<dbReference type="Gene3D" id="6.10.140.620">
    <property type="match status" value="1"/>
</dbReference>
<dbReference type="Gene3D" id="3.30.63.10">
    <property type="entry name" value="Guanylate Kinase phosphate binding domain"/>
    <property type="match status" value="1"/>
</dbReference>
<dbReference type="Gene3D" id="1.10.287.650">
    <property type="entry name" value="L27 domain"/>
    <property type="match status" value="2"/>
</dbReference>
<dbReference type="Gene3D" id="3.40.50.300">
    <property type="entry name" value="P-loop containing nucleotide triphosphate hydrolases"/>
    <property type="match status" value="1"/>
</dbReference>
<dbReference type="Gene3D" id="3.30.200.20">
    <property type="entry name" value="Phosphorylase Kinase, domain 1"/>
    <property type="match status" value="1"/>
</dbReference>
<dbReference type="Gene3D" id="2.30.30.40">
    <property type="entry name" value="SH3 Domains"/>
    <property type="match status" value="1"/>
</dbReference>
<dbReference type="Gene3D" id="1.10.510.10">
    <property type="entry name" value="Transferase(Phosphotransferase) domain 1"/>
    <property type="match status" value="1"/>
</dbReference>
<dbReference type="InterPro" id="IPR035473">
    <property type="entry name" value="CASK_SH3"/>
</dbReference>
<dbReference type="InterPro" id="IPR008145">
    <property type="entry name" value="GK/Ca_channel_bsu"/>
</dbReference>
<dbReference type="InterPro" id="IPR008144">
    <property type="entry name" value="Guanylate_kin-like_dom"/>
</dbReference>
<dbReference type="InterPro" id="IPR020590">
    <property type="entry name" value="Guanylate_kinase_CS"/>
</dbReference>
<dbReference type="InterPro" id="IPR011009">
    <property type="entry name" value="Kinase-like_dom_sf"/>
</dbReference>
<dbReference type="InterPro" id="IPR014775">
    <property type="entry name" value="L27_C"/>
</dbReference>
<dbReference type="InterPro" id="IPR004172">
    <property type="entry name" value="L27_dom"/>
</dbReference>
<dbReference type="InterPro" id="IPR036892">
    <property type="entry name" value="L27_dom_sf"/>
</dbReference>
<dbReference type="InterPro" id="IPR050716">
    <property type="entry name" value="MAGUK"/>
</dbReference>
<dbReference type="InterPro" id="IPR027417">
    <property type="entry name" value="P-loop_NTPase"/>
</dbReference>
<dbReference type="InterPro" id="IPR001478">
    <property type="entry name" value="PDZ"/>
</dbReference>
<dbReference type="InterPro" id="IPR036034">
    <property type="entry name" value="PDZ_sf"/>
</dbReference>
<dbReference type="InterPro" id="IPR000719">
    <property type="entry name" value="Prot_kinase_dom"/>
</dbReference>
<dbReference type="InterPro" id="IPR036028">
    <property type="entry name" value="SH3-like_dom_sf"/>
</dbReference>
<dbReference type="InterPro" id="IPR001452">
    <property type="entry name" value="SH3_domain"/>
</dbReference>
<dbReference type="PANTHER" id="PTHR23122">
    <property type="entry name" value="MEMBRANE-ASSOCIATED GUANYLATE KINASE MAGUK"/>
    <property type="match status" value="1"/>
</dbReference>
<dbReference type="Pfam" id="PF00625">
    <property type="entry name" value="Guanylate_kin"/>
    <property type="match status" value="1"/>
</dbReference>
<dbReference type="Pfam" id="PF02828">
    <property type="entry name" value="L27"/>
    <property type="match status" value="2"/>
</dbReference>
<dbReference type="Pfam" id="PF00595">
    <property type="entry name" value="PDZ"/>
    <property type="match status" value="1"/>
</dbReference>
<dbReference type="Pfam" id="PF00069">
    <property type="entry name" value="Pkinase"/>
    <property type="match status" value="1"/>
</dbReference>
<dbReference type="Pfam" id="PF07653">
    <property type="entry name" value="SH3_2"/>
    <property type="match status" value="1"/>
</dbReference>
<dbReference type="SMART" id="SM00072">
    <property type="entry name" value="GuKc"/>
    <property type="match status" value="1"/>
</dbReference>
<dbReference type="SMART" id="SM00569">
    <property type="entry name" value="L27"/>
    <property type="match status" value="2"/>
</dbReference>
<dbReference type="SMART" id="SM00228">
    <property type="entry name" value="PDZ"/>
    <property type="match status" value="1"/>
</dbReference>
<dbReference type="SMART" id="SM00326">
    <property type="entry name" value="SH3"/>
    <property type="match status" value="1"/>
</dbReference>
<dbReference type="SUPFAM" id="SSF101288">
    <property type="entry name" value="L27 domain"/>
    <property type="match status" value="2"/>
</dbReference>
<dbReference type="SUPFAM" id="SSF52540">
    <property type="entry name" value="P-loop containing nucleoside triphosphate hydrolases"/>
    <property type="match status" value="1"/>
</dbReference>
<dbReference type="SUPFAM" id="SSF50156">
    <property type="entry name" value="PDZ domain-like"/>
    <property type="match status" value="1"/>
</dbReference>
<dbReference type="SUPFAM" id="SSF56112">
    <property type="entry name" value="Protein kinase-like (PK-like)"/>
    <property type="match status" value="1"/>
</dbReference>
<dbReference type="SUPFAM" id="SSF50044">
    <property type="entry name" value="SH3-domain"/>
    <property type="match status" value="1"/>
</dbReference>
<dbReference type="PROSITE" id="PS00856">
    <property type="entry name" value="GUANYLATE_KINASE_1"/>
    <property type="match status" value="1"/>
</dbReference>
<dbReference type="PROSITE" id="PS50052">
    <property type="entry name" value="GUANYLATE_KINASE_2"/>
    <property type="match status" value="1"/>
</dbReference>
<dbReference type="PROSITE" id="PS51022">
    <property type="entry name" value="L27"/>
    <property type="match status" value="2"/>
</dbReference>
<dbReference type="PROSITE" id="PS50106">
    <property type="entry name" value="PDZ"/>
    <property type="match status" value="1"/>
</dbReference>
<dbReference type="PROSITE" id="PS50011">
    <property type="entry name" value="PROTEIN_KINASE_DOM"/>
    <property type="match status" value="1"/>
</dbReference>
<dbReference type="PROSITE" id="PS50002">
    <property type="entry name" value="SH3"/>
    <property type="match status" value="1"/>
</dbReference>
<keyword id="KW-0002">3D-structure</keyword>
<keyword id="KW-0025">Alternative splicing</keyword>
<keyword id="KW-0067">ATP-binding</keyword>
<keyword id="KW-0112">Calmodulin-binding</keyword>
<keyword id="KW-1003">Cell membrane</keyword>
<keyword id="KW-0963">Cytoplasm</keyword>
<keyword id="KW-0418">Kinase</keyword>
<keyword id="KW-0472">Membrane</keyword>
<keyword id="KW-0547">Nucleotide-binding</keyword>
<keyword id="KW-0539">Nucleus</keyword>
<keyword id="KW-0597">Phosphoprotein</keyword>
<keyword id="KW-1185">Reference proteome</keyword>
<keyword id="KW-0677">Repeat</keyword>
<keyword id="KW-0723">Serine/threonine-protein kinase</keyword>
<keyword id="KW-0728">SH3 domain</keyword>
<keyword id="KW-0808">Transferase</keyword>
<evidence type="ECO:0000250" key="1"/>
<evidence type="ECO:0000250" key="2">
    <source>
        <dbReference type="UniProtKB" id="O14936"/>
    </source>
</evidence>
<evidence type="ECO:0000250" key="3">
    <source>
        <dbReference type="UniProtKB" id="Q62915"/>
    </source>
</evidence>
<evidence type="ECO:0000255" key="4">
    <source>
        <dbReference type="PROSITE-ProRule" id="PRU00100"/>
    </source>
</evidence>
<evidence type="ECO:0000255" key="5">
    <source>
        <dbReference type="PROSITE-ProRule" id="PRU00143"/>
    </source>
</evidence>
<evidence type="ECO:0000255" key="6">
    <source>
        <dbReference type="PROSITE-ProRule" id="PRU00159"/>
    </source>
</evidence>
<evidence type="ECO:0000255" key="7">
    <source>
        <dbReference type="PROSITE-ProRule" id="PRU00192"/>
    </source>
</evidence>
<evidence type="ECO:0000255" key="8">
    <source>
        <dbReference type="PROSITE-ProRule" id="PRU00365"/>
    </source>
</evidence>
<evidence type="ECO:0000256" key="9">
    <source>
        <dbReference type="SAM" id="MobiDB-lite"/>
    </source>
</evidence>
<evidence type="ECO:0000269" key="10">
    <source>
    </source>
</evidence>
<evidence type="ECO:0000269" key="11">
    <source>
    </source>
</evidence>
<evidence type="ECO:0000269" key="12">
    <source>
    </source>
</evidence>
<evidence type="ECO:0000269" key="13">
    <source>
    </source>
</evidence>
<evidence type="ECO:0000269" key="14">
    <source>
    </source>
</evidence>
<evidence type="ECO:0000269" key="15">
    <source>
    </source>
</evidence>
<evidence type="ECO:0000303" key="16">
    <source>
    </source>
</evidence>
<evidence type="ECO:0000303" key="17">
    <source>
    </source>
</evidence>
<evidence type="ECO:0000303" key="18">
    <source>
    </source>
</evidence>
<evidence type="ECO:0000305" key="19"/>
<evidence type="ECO:0000312" key="20">
    <source>
        <dbReference type="MGI" id="MGI:1309489"/>
    </source>
</evidence>
<evidence type="ECO:0007744" key="21">
    <source>
    </source>
</evidence>
<evidence type="ECO:0007829" key="22">
    <source>
        <dbReference type="PDB" id="1Y74"/>
    </source>
</evidence>
<evidence type="ECO:0007829" key="23">
    <source>
        <dbReference type="PDB" id="6Y9O"/>
    </source>
</evidence>
<gene>
    <name evidence="20" type="primary">Cask</name>
    <name evidence="16" type="synonym">Lin-2</name>
</gene>
<sequence length="926" mass="105109">MADDDVLFEDVYELCEVIGKGPFSVVRRCINRETGQQFAVKIVDVAKFTSSPGLSTEDLKREASICHMLKHPHIVELLETYSSDGMLYMVFEFMDGADLCFEIVKRADAGFVYSEAVASHYMRQILEALRYCHDNNIIHRDVKPHCVLLASKENSAPVKLGGFGVAIQLGESGLVAGGRVGTPHFMAPEVVKREPYGKPVDVWGCGVILFILLSGCLPFYGTKERLFEGIIKGKYKMNPRQWSHISESAKDLVRRMLMLDPAERITVYEALNHPWLKERDRYAYKIHLPETVEQLRKFNARRKLKGAVLAAVSSHKFNSFYGDPPEELPDFSEDPTSSGLLAAERAVSQVLDSLEEIHALTDCSEKDLDFLHSVFQDQHLHTLLDLYDKINTKSSPQIRNPPSDAVQRAKEVLEEISCYPENNDAKELKRILTQPHFMALLQTHDVVAHEVYSDEALRVTPPPTSPYLNGDSPESANGDMDMENVTRVRLVQFQKNTDEPMGITLKMNELNHCIVARIMHGGMIHRQGTLHVGDEIREINGISVANQTVEQLQKMLREMRGSITFKIVPSYRTQSSSCERDSPSTSRQSPANGHSSTNNSVSDLPSTTQPKGRQIYVRAQFEYDPAKDDLIPCKEAGIRFRVGDIIQIISKDDHNWWQGKLENSKNGTAGLIPSPELQEWRVACIAMEKTKQEQQASCTWFGKKKKQYKDKYLAKHNAVFDQLDLVTYEEVVKLPAFKRKTLVLLGAHGVGRRHIKNTLITKHPDRFAYPIPHTTRPPKKDEENGKNYYFVSHDQMMQDISNNEYLEYGSHEDAMYGTKLETIRKIHEQGLIAILDVEPQALKVLRTAEFAPFVVFIAAPTITPGLNEDESLQRLQKESDVLQRTYAHYFDLTIINNEIDETIRHLEEAVELVCTAPQWVPVSWVY</sequence>
<feature type="chain" id="PRO_0000094569" description="Peripheral plasma membrane protein CASK">
    <location>
        <begin position="1"/>
        <end position="926"/>
    </location>
</feature>
<feature type="domain" description="Protein kinase" evidence="6">
    <location>
        <begin position="12"/>
        <end position="276"/>
    </location>
</feature>
<feature type="domain" description="L27 1" evidence="8">
    <location>
        <begin position="343"/>
        <end position="398"/>
    </location>
</feature>
<feature type="domain" description="L27 2" evidence="8">
    <location>
        <begin position="402"/>
        <end position="455"/>
    </location>
</feature>
<feature type="domain" description="PDZ" evidence="5">
    <location>
        <begin position="490"/>
        <end position="571"/>
    </location>
</feature>
<feature type="domain" description="SH3" evidence="7">
    <location>
        <begin position="612"/>
        <end position="682"/>
    </location>
</feature>
<feature type="domain" description="Guanylate kinase-like" evidence="4">
    <location>
        <begin position="739"/>
        <end position="911"/>
    </location>
</feature>
<feature type="region of interest" description="Calmodulin-binding">
    <location>
        <begin position="305"/>
        <end position="315"/>
    </location>
</feature>
<feature type="region of interest" description="Required for interaction with NRXN1 (via C-terminal tail)" evidence="3">
    <location>
        <begin position="482"/>
        <end position="909"/>
    </location>
</feature>
<feature type="region of interest" description="Disordered" evidence="9">
    <location>
        <begin position="574"/>
        <end position="610"/>
    </location>
</feature>
<feature type="active site" evidence="1">
    <location>
        <position position="141"/>
    </location>
</feature>
<feature type="binding site" evidence="4 6">
    <location>
        <begin position="18"/>
        <end position="26"/>
    </location>
    <ligand>
        <name>ATP</name>
        <dbReference type="ChEBI" id="CHEBI:30616"/>
    </ligand>
</feature>
<feature type="binding site" evidence="6">
    <location>
        <position position="41"/>
    </location>
    <ligand>
        <name>ATP</name>
        <dbReference type="ChEBI" id="CHEBI:30616"/>
    </ligand>
</feature>
<feature type="modified residue" description="Phosphoserine" evidence="2">
    <location>
        <position position="51"/>
    </location>
</feature>
<feature type="modified residue" description="Phosphoserine; by autocatalysis" evidence="2">
    <location>
        <position position="151"/>
    </location>
</feature>
<feature type="modified residue" description="Phosphoserine; by autocatalysis" evidence="2">
    <location>
        <position position="155"/>
    </location>
</feature>
<feature type="modified residue" description="Phosphothreonine" evidence="21">
    <location>
        <position position="182"/>
    </location>
</feature>
<feature type="modified residue" description="Phosphoserine" evidence="2">
    <location>
        <position position="313"/>
    </location>
</feature>
<feature type="splice variant" id="VSP_024614" description="In isoform 3, isoform 4 and isoform 5." evidence="17">
    <location>
        <begin position="340"/>
        <end position="345"/>
    </location>
</feature>
<feature type="splice variant" id="VSP_003152" description="In isoform 2." evidence="18">
    <original>RDSPSTSRQSPANGHSSTNNSVSDLPSTTQPKGRQIYVRAQFEYDPAKDDLIPCKEAGIRFRVGDIIQIISKDDHNWWQGKLENS</original>
    <variation>VISLTSLSYPNLPISSEFLTNFLLMAECFCFLGNCFCCAVTTLHTNFTTKITEQKEVPPTSSALLACRYLQPFCSKIKAKYRKLQ</variation>
    <location>
        <begin position="580"/>
        <end position="664"/>
    </location>
</feature>
<feature type="splice variant" id="VSP_024615" description="In isoform 3." evidence="17">
    <location>
        <begin position="580"/>
        <end position="602"/>
    </location>
</feature>
<feature type="splice variant" id="VSP_024616" description="In isoform 4." evidence="19">
    <location>
        <begin position="603"/>
        <end position="614"/>
    </location>
</feature>
<feature type="splice variant" id="VSP_003153" description="In isoform 2." evidence="18">
    <location>
        <begin position="665"/>
        <end position="926"/>
    </location>
</feature>
<feature type="sequence conflict" description="In Ref. 1; CAA76646/CAA76647." evidence="19" ref="1">
    <original>F</original>
    <variation>L</variation>
    <location>
        <position position="298"/>
    </location>
</feature>
<feature type="sequence conflict" description="In Ref. 1; CAA76646/CAA76647." evidence="19" ref="1">
    <original>N</original>
    <variation>K</variation>
    <location>
        <position position="666"/>
    </location>
</feature>
<feature type="sequence conflict" description="In Ref. 1; CAA76646/CAA76647." evidence="19" ref="1">
    <original>LQE</original>
    <variation>IQG</variation>
    <location>
        <begin position="677"/>
        <end position="679"/>
    </location>
</feature>
<feature type="sequence conflict" description="In Ref. 1; CAA76646/CAA76647." evidence="19" ref="1">
    <original>FDQL</original>
    <variation>LII</variation>
    <location>
        <begin position="720"/>
        <end position="723"/>
    </location>
</feature>
<feature type="sequence conflict" description="In Ref. 1; CAA76646/CAA76647." evidence="19" ref="1">
    <original>L</original>
    <variation>S</variation>
    <location>
        <position position="742"/>
    </location>
</feature>
<feature type="sequence conflict" description="In Ref. 1; CAA76646/CAA76647." evidence="19" ref="1">
    <original>Y</original>
    <variation>C</variation>
    <location>
        <position position="769"/>
    </location>
</feature>
<feature type="sequence conflict" description="In Ref. 1; CAA76646/CAA76647." evidence="19" ref="1">
    <original>Q</original>
    <variation>R</variation>
    <location>
        <position position="798"/>
    </location>
</feature>
<feature type="sequence conflict" description="In Ref. 1; CAA76646/CAA76647." evidence="19" ref="1">
    <original>Y</original>
    <variation>F</variation>
    <location>
        <position position="816"/>
    </location>
</feature>
<feature type="sequence conflict" description="In Ref. 1; CAA76646/CAA76647." evidence="19" ref="1">
    <original>ETI</original>
    <variation>DH</variation>
    <location>
        <begin position="821"/>
        <end position="823"/>
    </location>
</feature>
<feature type="sequence conflict" description="In Ref. 1; CAA76646/CAA76647." evidence="19" ref="1">
    <original>A</original>
    <variation>P</variation>
    <location>
        <position position="851"/>
    </location>
</feature>
<feature type="helix" evidence="22">
    <location>
        <begin position="406"/>
        <end position="417"/>
    </location>
</feature>
<feature type="helix" evidence="22">
    <location>
        <begin position="423"/>
        <end position="433"/>
    </location>
</feature>
<feature type="helix" evidence="22">
    <location>
        <begin position="435"/>
        <end position="452"/>
    </location>
</feature>
<feature type="strand" evidence="23">
    <location>
        <begin position="922"/>
        <end position="925"/>
    </location>
</feature>
<feature type="modified residue" description="Phosphoserine" evidence="21">
    <location sequence="O70589-3">
        <position position="570"/>
    </location>
</feature>
<feature type="modified residue" description="Phosphoserine" evidence="21">
    <location sequence="O70589-3">
        <position position="571"/>
    </location>
</feature>
<protein>
    <recommendedName>
        <fullName evidence="19">Peripheral plasma membrane protein CASK</fullName>
        <ecNumber>2.7.11.1</ecNumber>
    </recommendedName>
    <alternativeName>
        <fullName>Calcium/calmodulin-dependent serine protein kinase</fullName>
    </alternativeName>
</protein>
<accession>O70589</accession>
<accession>A2ADP8</accession>
<accession>A2ADP9</accession>
<accession>A2ADQ4</accession>
<accession>O70588</accession>
<accession>Q3UW92</accession>
<comment type="function">
    <text evidence="2 10 11">Multidomain scaffolding Mg(2+)-independent protein kinase that catalyzes the phosphotransfer from ATP to proteins such as NRXN1, and plays a role in synaptic transmembrane protein anchoring and ion channel trafficking (By similarity). Contributes to neural development and regulation of gene expression via interaction with the transcription factor TBR1. Binds to cell-surface proteins, including amyloid precursor protein, neurexins, and syndecans. May mediate a link between the extracellular matrix and the actin cytoskeleton via its interaction with syndecan and with the actin/spectrin-binding protein 4.1. Component of the LIN-10-LIN-2-LIN-7 complex, which associates with the motor protein KIF17 to transport vesicles containing N-methyl-D-aspartate (NMDA) receptor subunit NR2B along microtubules (PubMed:10846156).</text>
</comment>
<comment type="catalytic activity">
    <reaction evidence="2">
        <text>L-seryl-[protein] + ATP = O-phospho-L-seryl-[protein] + ADP + H(+)</text>
        <dbReference type="Rhea" id="RHEA:17989"/>
        <dbReference type="Rhea" id="RHEA-COMP:9863"/>
        <dbReference type="Rhea" id="RHEA-COMP:11604"/>
        <dbReference type="ChEBI" id="CHEBI:15378"/>
        <dbReference type="ChEBI" id="CHEBI:29999"/>
        <dbReference type="ChEBI" id="CHEBI:30616"/>
        <dbReference type="ChEBI" id="CHEBI:83421"/>
        <dbReference type="ChEBI" id="CHEBI:456216"/>
        <dbReference type="EC" id="2.7.11.1"/>
    </reaction>
    <physiologicalReaction direction="left-to-right" evidence="2">
        <dbReference type="Rhea" id="RHEA:17990"/>
    </physiologicalReaction>
</comment>
<comment type="catalytic activity">
    <reaction>
        <text>L-threonyl-[protein] + ATP = O-phospho-L-threonyl-[protein] + ADP + H(+)</text>
        <dbReference type="Rhea" id="RHEA:46608"/>
        <dbReference type="Rhea" id="RHEA-COMP:11060"/>
        <dbReference type="Rhea" id="RHEA-COMP:11605"/>
        <dbReference type="ChEBI" id="CHEBI:15378"/>
        <dbReference type="ChEBI" id="CHEBI:30013"/>
        <dbReference type="ChEBI" id="CHEBI:30616"/>
        <dbReference type="ChEBI" id="CHEBI:61977"/>
        <dbReference type="ChEBI" id="CHEBI:456216"/>
        <dbReference type="EC" id="2.7.11.1"/>
    </reaction>
</comment>
<comment type="cofactor">
    <text evidence="1">Unlike other protein kinases, does not require a divalent cation such as magnesium for catalytic activity.</text>
</comment>
<comment type="activity regulation">
    <text evidence="1">Differs from archetypal CaMK members in that the kinase domain exhibits a constitutively active conformation and the autoinhibitory region does not engage in direct contact with the ATP-binding cleft, although it still binds Ca(2+)/CAM.</text>
</comment>
<comment type="subunit">
    <text evidence="2 3 10 11 12 13 14 15">CASK and LIN7 form a tripartite complex with CASKIN1 (By similarity). Component of the brain-specific heterotrimeric complex (LIN-10-LIN-2-LIN-7 complex) composed of at least APBA1, CASK, and LIN7, which associates with the motor protein KIF17 to transport vesicles along microtubules (PubMed:10846156). Forms a heterotrimeric complex with DLG1 and LIN7B via their L27 domains (PubMed:15863617, PubMed:22337881). Identified in a complex with ACTN4, IQGAP1, MAGI2, NPHS1, SPTAN1 and SPTBN1 (By similarity). Part of a complex containing CASK, TBR1 and TSPYL2 (PubMed:10749215, PubMed:15066269). Interacts with WHRN (By similarity). Interacts (via the PDZ, SH3 and guanylate kinase-like domains) with NRXN1 (via C-terminus) (PubMed:25385611). Interacts with CASKIN1, APBA1, LIN7(A/B/C), and L27 domain of DLG1 and isoform 2 of DLG4 (By similarity). Interacts with FCHSD2 (By similarity). Interacts with KIRREL3 (By similarity). Interacts with TBR1 (By similarity). Interacts with TSPYL2 (PubMed:15066269).</text>
</comment>
<comment type="subcellular location">
    <subcellularLocation>
        <location evidence="3">Nucleus</location>
    </subcellularLocation>
    <subcellularLocation>
        <location evidence="3">Cytoplasm</location>
    </subcellularLocation>
    <subcellularLocation>
        <location evidence="3">Cell membrane</location>
        <topology evidence="3">Peripheral membrane protein</topology>
    </subcellularLocation>
</comment>
<comment type="alternative products">
    <event type="alternative splicing"/>
    <isoform>
        <id>O70589-1</id>
        <name>1</name>
        <name>CASK-B</name>
        <sequence type="displayed"/>
    </isoform>
    <isoform>
        <id>O70589-2</id>
        <name>2</name>
        <name>CASK-A</name>
        <sequence type="described" ref="VSP_003152 VSP_003153"/>
    </isoform>
    <isoform>
        <id>O70589-3</id>
        <name>3</name>
        <sequence type="described" ref="VSP_024614 VSP_024615"/>
    </isoform>
    <isoform>
        <id>O70589-4</id>
        <name>4</name>
        <sequence type="described" ref="VSP_024614 VSP_024616"/>
    </isoform>
    <isoform>
        <id>O70589-5</id>
        <name>5</name>
        <sequence type="described" ref="VSP_024614"/>
    </isoform>
</comment>
<comment type="domain">
    <text evidence="1">The first L27 domain binds DLG1 and the second L27 domain probably binds LIN7.</text>
</comment>
<comment type="domain">
    <text evidence="1">The protein kinase domain mediates the interaction with FCHSD2.</text>
</comment>
<comment type="similarity">
    <text evidence="19">In the N-terminal section; belongs to the protein kinase superfamily. CAMK Ser/Thr protein kinase family. CaMK subfamily.</text>
</comment>
<comment type="similarity">
    <text evidence="19">Belongs to the MAGUK family.</text>
</comment>
<name>CSKP_MOUSE</name>
<reference key="1">
    <citation type="journal article" date="1998" name="Genomics">
        <title>Murine CASK is disrupted in a sex-linked cleft palate mouse mutant.</title>
        <authorList>
            <person name="Laverty H.G."/>
            <person name="Wilson J.B."/>
        </authorList>
    </citation>
    <scope>NUCLEOTIDE SEQUENCE [MRNA] (ISOFORMS 1 AND 2)</scope>
    <source>
        <strain>C57BL/6J</strain>
        <tissue>Embryo</tissue>
    </source>
</reference>
<reference key="2">
    <citation type="journal article" date="2009" name="PLoS Biol.">
        <title>Lineage-specific biology revealed by a finished genome assembly of the mouse.</title>
        <authorList>
            <person name="Church D.M."/>
            <person name="Goodstadt L."/>
            <person name="Hillier L.W."/>
            <person name="Zody M.C."/>
            <person name="Goldstein S."/>
            <person name="She X."/>
            <person name="Bult C.J."/>
            <person name="Agarwala R."/>
            <person name="Cherry J.L."/>
            <person name="DiCuccio M."/>
            <person name="Hlavina W."/>
            <person name="Kapustin Y."/>
            <person name="Meric P."/>
            <person name="Maglott D."/>
            <person name="Birtle Z."/>
            <person name="Marques A.C."/>
            <person name="Graves T."/>
            <person name="Zhou S."/>
            <person name="Teague B."/>
            <person name="Potamousis K."/>
            <person name="Churas C."/>
            <person name="Place M."/>
            <person name="Herschleb J."/>
            <person name="Runnheim R."/>
            <person name="Forrest D."/>
            <person name="Amos-Landgraf J."/>
            <person name="Schwartz D.C."/>
            <person name="Cheng Z."/>
            <person name="Lindblad-Toh K."/>
            <person name="Eichler E.E."/>
            <person name="Ponting C.P."/>
        </authorList>
    </citation>
    <scope>NUCLEOTIDE SEQUENCE [LARGE SCALE GENOMIC DNA]</scope>
    <source>
        <strain>C57BL/6J</strain>
    </source>
</reference>
<reference key="3">
    <citation type="journal article" date="2005" name="Science">
        <title>The transcriptional landscape of the mammalian genome.</title>
        <authorList>
            <person name="Carninci P."/>
            <person name="Kasukawa T."/>
            <person name="Katayama S."/>
            <person name="Gough J."/>
            <person name="Frith M.C."/>
            <person name="Maeda N."/>
            <person name="Oyama R."/>
            <person name="Ravasi T."/>
            <person name="Lenhard B."/>
            <person name="Wells C."/>
            <person name="Kodzius R."/>
            <person name="Shimokawa K."/>
            <person name="Bajic V.B."/>
            <person name="Brenner S.E."/>
            <person name="Batalov S."/>
            <person name="Forrest A.R."/>
            <person name="Zavolan M."/>
            <person name="Davis M.J."/>
            <person name="Wilming L.G."/>
            <person name="Aidinis V."/>
            <person name="Allen J.E."/>
            <person name="Ambesi-Impiombato A."/>
            <person name="Apweiler R."/>
            <person name="Aturaliya R.N."/>
            <person name="Bailey T.L."/>
            <person name="Bansal M."/>
            <person name="Baxter L."/>
            <person name="Beisel K.W."/>
            <person name="Bersano T."/>
            <person name="Bono H."/>
            <person name="Chalk A.M."/>
            <person name="Chiu K.P."/>
            <person name="Choudhary V."/>
            <person name="Christoffels A."/>
            <person name="Clutterbuck D.R."/>
            <person name="Crowe M.L."/>
            <person name="Dalla E."/>
            <person name="Dalrymple B.P."/>
            <person name="de Bono B."/>
            <person name="Della Gatta G."/>
            <person name="di Bernardo D."/>
            <person name="Down T."/>
            <person name="Engstrom P."/>
            <person name="Fagiolini M."/>
            <person name="Faulkner G."/>
            <person name="Fletcher C.F."/>
            <person name="Fukushima T."/>
            <person name="Furuno M."/>
            <person name="Futaki S."/>
            <person name="Gariboldi M."/>
            <person name="Georgii-Hemming P."/>
            <person name="Gingeras T.R."/>
            <person name="Gojobori T."/>
            <person name="Green R.E."/>
            <person name="Gustincich S."/>
            <person name="Harbers M."/>
            <person name="Hayashi Y."/>
            <person name="Hensch T.K."/>
            <person name="Hirokawa N."/>
            <person name="Hill D."/>
            <person name="Huminiecki L."/>
            <person name="Iacono M."/>
            <person name="Ikeo K."/>
            <person name="Iwama A."/>
            <person name="Ishikawa T."/>
            <person name="Jakt M."/>
            <person name="Kanapin A."/>
            <person name="Katoh M."/>
            <person name="Kawasawa Y."/>
            <person name="Kelso J."/>
            <person name="Kitamura H."/>
            <person name="Kitano H."/>
            <person name="Kollias G."/>
            <person name="Krishnan S.P."/>
            <person name="Kruger A."/>
            <person name="Kummerfeld S.K."/>
            <person name="Kurochkin I.V."/>
            <person name="Lareau L.F."/>
            <person name="Lazarevic D."/>
            <person name="Lipovich L."/>
            <person name="Liu J."/>
            <person name="Liuni S."/>
            <person name="McWilliam S."/>
            <person name="Madan Babu M."/>
            <person name="Madera M."/>
            <person name="Marchionni L."/>
            <person name="Matsuda H."/>
            <person name="Matsuzawa S."/>
            <person name="Miki H."/>
            <person name="Mignone F."/>
            <person name="Miyake S."/>
            <person name="Morris K."/>
            <person name="Mottagui-Tabar S."/>
            <person name="Mulder N."/>
            <person name="Nakano N."/>
            <person name="Nakauchi H."/>
            <person name="Ng P."/>
            <person name="Nilsson R."/>
            <person name="Nishiguchi S."/>
            <person name="Nishikawa S."/>
            <person name="Nori F."/>
            <person name="Ohara O."/>
            <person name="Okazaki Y."/>
            <person name="Orlando V."/>
            <person name="Pang K.C."/>
            <person name="Pavan W.J."/>
            <person name="Pavesi G."/>
            <person name="Pesole G."/>
            <person name="Petrovsky N."/>
            <person name="Piazza S."/>
            <person name="Reed J."/>
            <person name="Reid J.F."/>
            <person name="Ring B.Z."/>
            <person name="Ringwald M."/>
            <person name="Rost B."/>
            <person name="Ruan Y."/>
            <person name="Salzberg S.L."/>
            <person name="Sandelin A."/>
            <person name="Schneider C."/>
            <person name="Schoenbach C."/>
            <person name="Sekiguchi K."/>
            <person name="Semple C.A."/>
            <person name="Seno S."/>
            <person name="Sessa L."/>
            <person name="Sheng Y."/>
            <person name="Shibata Y."/>
            <person name="Shimada H."/>
            <person name="Shimada K."/>
            <person name="Silva D."/>
            <person name="Sinclair B."/>
            <person name="Sperling S."/>
            <person name="Stupka E."/>
            <person name="Sugiura K."/>
            <person name="Sultana R."/>
            <person name="Takenaka Y."/>
            <person name="Taki K."/>
            <person name="Tammoja K."/>
            <person name="Tan S.L."/>
            <person name="Tang S."/>
            <person name="Taylor M.S."/>
            <person name="Tegner J."/>
            <person name="Teichmann S.A."/>
            <person name="Ueda H.R."/>
            <person name="van Nimwegen E."/>
            <person name="Verardo R."/>
            <person name="Wei C.L."/>
            <person name="Yagi K."/>
            <person name="Yamanishi H."/>
            <person name="Zabarovsky E."/>
            <person name="Zhu S."/>
            <person name="Zimmer A."/>
            <person name="Hide W."/>
            <person name="Bult C."/>
            <person name="Grimmond S.M."/>
            <person name="Teasdale R.D."/>
            <person name="Liu E.T."/>
            <person name="Brusic V."/>
            <person name="Quackenbush J."/>
            <person name="Wahlestedt C."/>
            <person name="Mattick J.S."/>
            <person name="Hume D.A."/>
            <person name="Kai C."/>
            <person name="Sasaki D."/>
            <person name="Tomaru Y."/>
            <person name="Fukuda S."/>
            <person name="Kanamori-Katayama M."/>
            <person name="Suzuki M."/>
            <person name="Aoki J."/>
            <person name="Arakawa T."/>
            <person name="Iida J."/>
            <person name="Imamura K."/>
            <person name="Itoh M."/>
            <person name="Kato T."/>
            <person name="Kawaji H."/>
            <person name="Kawagashira N."/>
            <person name="Kawashima T."/>
            <person name="Kojima M."/>
            <person name="Kondo S."/>
            <person name="Konno H."/>
            <person name="Nakano K."/>
            <person name="Ninomiya N."/>
            <person name="Nishio T."/>
            <person name="Okada M."/>
            <person name="Plessy C."/>
            <person name="Shibata K."/>
            <person name="Shiraki T."/>
            <person name="Suzuki S."/>
            <person name="Tagami M."/>
            <person name="Waki K."/>
            <person name="Watahiki A."/>
            <person name="Okamura-Oho Y."/>
            <person name="Suzuki H."/>
            <person name="Kawai J."/>
            <person name="Hayashizaki Y."/>
        </authorList>
    </citation>
    <scope>NUCLEOTIDE SEQUENCE [LARGE SCALE MRNA] OF 273-926 (ISOFORM 3)</scope>
    <source>
        <strain>C57BL/6J</strain>
        <tissue>Cecum</tissue>
    </source>
</reference>
<reference key="4">
    <citation type="journal article" date="2000" name="Nature">
        <title>Nuclear translocation and transcription regulation by the membrane-associated guanylate kinase CASK/LIN-2.</title>
        <authorList>
            <person name="Hsueh Y.P."/>
            <person name="Wang T.F."/>
            <person name="Yang F.C."/>
            <person name="Sheng M."/>
        </authorList>
    </citation>
    <scope>FUNCTION</scope>
    <scope>INTERACTION WITH TBR1</scope>
</reference>
<reference key="5">
    <citation type="journal article" date="2000" name="Science">
        <title>Kinesin superfamily motor protein KIF17 and mLin-10 in NMDA receptor-containing vesicle transport.</title>
        <authorList>
            <person name="Setou M."/>
            <person name="Nakagawa T."/>
            <person name="Seog D.-H."/>
            <person name="Hirokawa N."/>
        </authorList>
    </citation>
    <scope>FUNCTION</scope>
    <scope>IDENTIFICATION IN COMPLEX WITH APBA1 AND LIN7</scope>
</reference>
<reference key="6">
    <citation type="journal article" date="2004" name="Neuron">
        <title>Transcriptional modification by a CASK-interacting nucleosome assembly protein.</title>
        <authorList>
            <person name="Wang G.-S."/>
            <person name="Hong C.-J."/>
            <person name="Yen T.-Y."/>
            <person name="Huang H.-Y."/>
            <person name="Ou Y."/>
            <person name="Huang T.-N."/>
            <person name="Jung W.-G."/>
            <person name="Kuo T.-Y."/>
            <person name="Sheng M."/>
            <person name="Wang T.-F."/>
            <person name="Hsueh Y.-P."/>
        </authorList>
    </citation>
    <scope>INTERACTION WITH TSPYL2</scope>
    <scope>IDENTIFICATION IN COMPLEX WITH TSPYL2 AND TBR1</scope>
    <source>
        <strain>C57BL/6J</strain>
    </source>
</reference>
<reference key="7">
    <citation type="journal article" date="2010" name="Cell">
        <title>A tissue-specific atlas of mouse protein phosphorylation and expression.</title>
        <authorList>
            <person name="Huttlin E.L."/>
            <person name="Jedrychowski M.P."/>
            <person name="Elias J.E."/>
            <person name="Goswami T."/>
            <person name="Rad R."/>
            <person name="Beausoleil S.A."/>
            <person name="Villen J."/>
            <person name="Haas W."/>
            <person name="Sowa M.E."/>
            <person name="Gygi S.P."/>
        </authorList>
    </citation>
    <scope>PHOSPHORYLATION [LARGE SCALE ANALYSIS] AT THR-182</scope>
    <scope>PHOSPHORYLATION [LARGE SCALE ANALYSIS] AT SER-570 AND SER-571 (ISOFORM 3)</scope>
    <scope>IDENTIFICATION BY MASS SPECTROMETRY [LARGE SCALE ANALYSIS]</scope>
    <source>
        <tissue>Brain</tissue>
        <tissue>Brown adipose tissue</tissue>
        <tissue>Kidney</tissue>
        <tissue>Liver</tissue>
        <tissue>Lung</tissue>
        <tissue>Pancreas</tissue>
    </source>
</reference>
<reference key="8">
    <citation type="journal article" date="2012" name="J. Biol. Chem.">
        <title>Structure of an L27 domain heterotrimer from cell polarity complex Patj/Pals1/Mals2 reveals mutually independent L27 domain assembly mode.</title>
        <authorList>
            <person name="Zhang J."/>
            <person name="Yang X."/>
            <person name="Wang Z."/>
            <person name="Zhou H."/>
            <person name="Xie X."/>
            <person name="Shen Y."/>
            <person name="Long J."/>
        </authorList>
    </citation>
    <scope>IDENTIFICATION IN A COMPLEX WITH DLG1 AND LIN7B</scope>
</reference>
<reference key="9">
    <citation type="journal article" date="2014" name="Proc. Natl. Acad. Sci. U.S.A.">
        <title>Structure of Crumbs tail in complex with the PALS1 PDZ-SH3-GK tandem reveals a highly specific assembly mechanism for the apical Crumbs complex.</title>
        <authorList>
            <person name="Li Y."/>
            <person name="Wei Z."/>
            <person name="Yan Y."/>
            <person name="Wan Q."/>
            <person name="Du Q."/>
            <person name="Zhang M."/>
        </authorList>
    </citation>
    <scope>INTERACTION WITH NRXN1</scope>
</reference>
<reference key="10">
    <citation type="journal article" date="2005" name="Proc. Natl. Acad. Sci. U.S.A.">
        <title>A unified assembly mode revealed by the structures of tetrameric L27 domain complexes formed by mLin-2/mLin-7 and Patj/Pals1 scaffold proteins.</title>
        <authorList>
            <person name="Feng W."/>
            <person name="Long J.-F."/>
            <person name="Zhang M."/>
        </authorList>
    </citation>
    <scope>STRUCTURE BY NMR OF 405-454</scope>
    <scope>INTERACTION WITH LIN7B</scope>
</reference>